<accession>Q72QT3</accession>
<organism>
    <name type="scientific">Leptospira interrogans serogroup Icterohaemorrhagiae serovar copenhageni (strain Fiocruz L1-130)</name>
    <dbReference type="NCBI Taxonomy" id="267671"/>
    <lineage>
        <taxon>Bacteria</taxon>
        <taxon>Pseudomonadati</taxon>
        <taxon>Spirochaetota</taxon>
        <taxon>Spirochaetia</taxon>
        <taxon>Leptospirales</taxon>
        <taxon>Leptospiraceae</taxon>
        <taxon>Leptospira</taxon>
    </lineage>
</organism>
<reference key="1">
    <citation type="journal article" date="2004" name="J. Bacteriol.">
        <title>Comparative genomics of two Leptospira interrogans serovars reveals novel insights into physiology and pathogenesis.</title>
        <authorList>
            <person name="Nascimento A.L.T.O."/>
            <person name="Ko A.I."/>
            <person name="Martins E.A.L."/>
            <person name="Monteiro-Vitorello C.B."/>
            <person name="Ho P.L."/>
            <person name="Haake D.A."/>
            <person name="Verjovski-Almeida S."/>
            <person name="Hartskeerl R.A."/>
            <person name="Marques M.V."/>
            <person name="Oliveira M.C."/>
            <person name="Menck C.F.M."/>
            <person name="Leite L.C.C."/>
            <person name="Carrer H."/>
            <person name="Coutinho L.L."/>
            <person name="Degrave W.M."/>
            <person name="Dellagostin O.A."/>
            <person name="El-Dorry H."/>
            <person name="Ferro E.S."/>
            <person name="Ferro M.I.T."/>
            <person name="Furlan L.R."/>
            <person name="Gamberini M."/>
            <person name="Giglioti E.A."/>
            <person name="Goes-Neto A."/>
            <person name="Goldman G.H."/>
            <person name="Goldman M.H.S."/>
            <person name="Harakava R."/>
            <person name="Jeronimo S.M.B."/>
            <person name="Junqueira-de-Azevedo I.L.M."/>
            <person name="Kimura E.T."/>
            <person name="Kuramae E.E."/>
            <person name="Lemos E.G.M."/>
            <person name="Lemos M.V.F."/>
            <person name="Marino C.L."/>
            <person name="Nunes L.R."/>
            <person name="de Oliveira R.C."/>
            <person name="Pereira G.G."/>
            <person name="Reis M.S."/>
            <person name="Schriefer A."/>
            <person name="Siqueira W.J."/>
            <person name="Sommer P."/>
            <person name="Tsai S.M."/>
            <person name="Simpson A.J.G."/>
            <person name="Ferro J.A."/>
            <person name="Camargo L.E.A."/>
            <person name="Kitajima J.P."/>
            <person name="Setubal J.C."/>
            <person name="Van Sluys M.A."/>
        </authorList>
    </citation>
    <scope>NUCLEOTIDE SEQUENCE [LARGE SCALE GENOMIC DNA]</scope>
    <source>
        <strain>Fiocruz L1-130</strain>
    </source>
</reference>
<gene>
    <name evidence="1" type="primary">folD</name>
    <name type="ordered locus">LIC_12026</name>
</gene>
<name>FOLD_LEPIC</name>
<keyword id="KW-0028">Amino-acid biosynthesis</keyword>
<keyword id="KW-0368">Histidine biosynthesis</keyword>
<keyword id="KW-0378">Hydrolase</keyword>
<keyword id="KW-0486">Methionine biosynthesis</keyword>
<keyword id="KW-0511">Multifunctional enzyme</keyword>
<keyword id="KW-0521">NADP</keyword>
<keyword id="KW-0554">One-carbon metabolism</keyword>
<keyword id="KW-0560">Oxidoreductase</keyword>
<keyword id="KW-0658">Purine biosynthesis</keyword>
<comment type="function">
    <text evidence="1">Catalyzes the oxidation of 5,10-methylenetetrahydrofolate to 5,10-methenyltetrahydrofolate and then the hydrolysis of 5,10-methenyltetrahydrofolate to 10-formyltetrahydrofolate.</text>
</comment>
<comment type="catalytic activity">
    <reaction evidence="1">
        <text>(6R)-5,10-methylene-5,6,7,8-tetrahydrofolate + NADP(+) = (6R)-5,10-methenyltetrahydrofolate + NADPH</text>
        <dbReference type="Rhea" id="RHEA:22812"/>
        <dbReference type="ChEBI" id="CHEBI:15636"/>
        <dbReference type="ChEBI" id="CHEBI:57455"/>
        <dbReference type="ChEBI" id="CHEBI:57783"/>
        <dbReference type="ChEBI" id="CHEBI:58349"/>
        <dbReference type="EC" id="1.5.1.5"/>
    </reaction>
</comment>
<comment type="catalytic activity">
    <reaction evidence="1">
        <text>(6R)-5,10-methenyltetrahydrofolate + H2O = (6R)-10-formyltetrahydrofolate + H(+)</text>
        <dbReference type="Rhea" id="RHEA:23700"/>
        <dbReference type="ChEBI" id="CHEBI:15377"/>
        <dbReference type="ChEBI" id="CHEBI:15378"/>
        <dbReference type="ChEBI" id="CHEBI:57455"/>
        <dbReference type="ChEBI" id="CHEBI:195366"/>
        <dbReference type="EC" id="3.5.4.9"/>
    </reaction>
</comment>
<comment type="pathway">
    <text evidence="1">One-carbon metabolism; tetrahydrofolate interconversion.</text>
</comment>
<comment type="subunit">
    <text evidence="1">Homodimer.</text>
</comment>
<comment type="similarity">
    <text evidence="1">Belongs to the tetrahydrofolate dehydrogenase/cyclohydrolase family.</text>
</comment>
<feature type="chain" id="PRO_0000268387" description="Bifunctional protein FolD">
    <location>
        <begin position="1"/>
        <end position="284"/>
    </location>
</feature>
<feature type="binding site" evidence="1">
    <location>
        <begin position="166"/>
        <end position="168"/>
    </location>
    <ligand>
        <name>NADP(+)</name>
        <dbReference type="ChEBI" id="CHEBI:58349"/>
    </ligand>
</feature>
<feature type="binding site" evidence="1">
    <location>
        <position position="191"/>
    </location>
    <ligand>
        <name>NADP(+)</name>
        <dbReference type="ChEBI" id="CHEBI:58349"/>
    </ligand>
</feature>
<protein>
    <recommendedName>
        <fullName evidence="1">Bifunctional protein FolD</fullName>
    </recommendedName>
    <domain>
        <recommendedName>
            <fullName evidence="1">Methylenetetrahydrofolate dehydrogenase</fullName>
            <ecNumber evidence="1">1.5.1.5</ecNumber>
        </recommendedName>
    </domain>
    <domain>
        <recommendedName>
            <fullName evidence="1">Methenyltetrahydrofolate cyclohydrolase</fullName>
            <ecNumber evidence="1">3.5.4.9</ecNumber>
        </recommendedName>
    </domain>
</protein>
<dbReference type="EC" id="1.5.1.5" evidence="1"/>
<dbReference type="EC" id="3.5.4.9" evidence="1"/>
<dbReference type="EMBL" id="AE016823">
    <property type="protein sequence ID" value="AAS70601.1"/>
    <property type="molecule type" value="Genomic_DNA"/>
</dbReference>
<dbReference type="RefSeq" id="WP_001070308.1">
    <property type="nucleotide sequence ID" value="NC_005823.1"/>
</dbReference>
<dbReference type="SMR" id="Q72QT3"/>
<dbReference type="GeneID" id="61141917"/>
<dbReference type="KEGG" id="lic:LIC_12026"/>
<dbReference type="HOGENOM" id="CLU_034045_2_1_12"/>
<dbReference type="UniPathway" id="UPA00193"/>
<dbReference type="Proteomes" id="UP000007037">
    <property type="component" value="Chromosome I"/>
</dbReference>
<dbReference type="GO" id="GO:0005829">
    <property type="term" value="C:cytosol"/>
    <property type="evidence" value="ECO:0007669"/>
    <property type="project" value="TreeGrafter"/>
</dbReference>
<dbReference type="GO" id="GO:0004477">
    <property type="term" value="F:methenyltetrahydrofolate cyclohydrolase activity"/>
    <property type="evidence" value="ECO:0007669"/>
    <property type="project" value="UniProtKB-UniRule"/>
</dbReference>
<dbReference type="GO" id="GO:0004488">
    <property type="term" value="F:methylenetetrahydrofolate dehydrogenase (NADP+) activity"/>
    <property type="evidence" value="ECO:0007669"/>
    <property type="project" value="UniProtKB-UniRule"/>
</dbReference>
<dbReference type="GO" id="GO:0000105">
    <property type="term" value="P:L-histidine biosynthetic process"/>
    <property type="evidence" value="ECO:0007669"/>
    <property type="project" value="UniProtKB-KW"/>
</dbReference>
<dbReference type="GO" id="GO:0009086">
    <property type="term" value="P:methionine biosynthetic process"/>
    <property type="evidence" value="ECO:0007669"/>
    <property type="project" value="UniProtKB-KW"/>
</dbReference>
<dbReference type="GO" id="GO:0006164">
    <property type="term" value="P:purine nucleotide biosynthetic process"/>
    <property type="evidence" value="ECO:0007669"/>
    <property type="project" value="UniProtKB-KW"/>
</dbReference>
<dbReference type="GO" id="GO:0035999">
    <property type="term" value="P:tetrahydrofolate interconversion"/>
    <property type="evidence" value="ECO:0007669"/>
    <property type="project" value="UniProtKB-UniRule"/>
</dbReference>
<dbReference type="CDD" id="cd01080">
    <property type="entry name" value="NAD_bind_m-THF_DH_Cyclohyd"/>
    <property type="match status" value="1"/>
</dbReference>
<dbReference type="FunFam" id="3.40.50.720:FF:000094">
    <property type="entry name" value="Bifunctional protein FolD"/>
    <property type="match status" value="1"/>
</dbReference>
<dbReference type="FunFam" id="3.40.50.10860:FF:000005">
    <property type="entry name" value="C-1-tetrahydrofolate synthase, cytoplasmic, putative"/>
    <property type="match status" value="1"/>
</dbReference>
<dbReference type="Gene3D" id="3.40.50.10860">
    <property type="entry name" value="Leucine Dehydrogenase, chain A, domain 1"/>
    <property type="match status" value="1"/>
</dbReference>
<dbReference type="Gene3D" id="3.40.50.720">
    <property type="entry name" value="NAD(P)-binding Rossmann-like Domain"/>
    <property type="match status" value="1"/>
</dbReference>
<dbReference type="HAMAP" id="MF_01576">
    <property type="entry name" value="THF_DHG_CYH"/>
    <property type="match status" value="1"/>
</dbReference>
<dbReference type="InterPro" id="IPR046346">
    <property type="entry name" value="Aminoacid_DH-like_N_sf"/>
</dbReference>
<dbReference type="InterPro" id="IPR036291">
    <property type="entry name" value="NAD(P)-bd_dom_sf"/>
</dbReference>
<dbReference type="InterPro" id="IPR000672">
    <property type="entry name" value="THF_DH/CycHdrlase"/>
</dbReference>
<dbReference type="InterPro" id="IPR020630">
    <property type="entry name" value="THF_DH/CycHdrlase_cat_dom"/>
</dbReference>
<dbReference type="InterPro" id="IPR020867">
    <property type="entry name" value="THF_DH/CycHdrlase_CS"/>
</dbReference>
<dbReference type="InterPro" id="IPR020631">
    <property type="entry name" value="THF_DH/CycHdrlase_NAD-bd_dom"/>
</dbReference>
<dbReference type="NCBIfam" id="NF010774">
    <property type="entry name" value="PRK14177.1"/>
    <property type="match status" value="1"/>
</dbReference>
<dbReference type="PANTHER" id="PTHR48099:SF5">
    <property type="entry name" value="C-1-TETRAHYDROFOLATE SYNTHASE, CYTOPLASMIC"/>
    <property type="match status" value="1"/>
</dbReference>
<dbReference type="PANTHER" id="PTHR48099">
    <property type="entry name" value="C-1-TETRAHYDROFOLATE SYNTHASE, CYTOPLASMIC-RELATED"/>
    <property type="match status" value="1"/>
</dbReference>
<dbReference type="Pfam" id="PF00763">
    <property type="entry name" value="THF_DHG_CYH"/>
    <property type="match status" value="1"/>
</dbReference>
<dbReference type="Pfam" id="PF02882">
    <property type="entry name" value="THF_DHG_CYH_C"/>
    <property type="match status" value="1"/>
</dbReference>
<dbReference type="PRINTS" id="PR00085">
    <property type="entry name" value="THFDHDRGNASE"/>
</dbReference>
<dbReference type="SUPFAM" id="SSF53223">
    <property type="entry name" value="Aminoacid dehydrogenase-like, N-terminal domain"/>
    <property type="match status" value="1"/>
</dbReference>
<dbReference type="SUPFAM" id="SSF51735">
    <property type="entry name" value="NAD(P)-binding Rossmann-fold domains"/>
    <property type="match status" value="1"/>
</dbReference>
<dbReference type="PROSITE" id="PS00767">
    <property type="entry name" value="THF_DHG_CYH_2"/>
    <property type="match status" value="1"/>
</dbReference>
<proteinExistence type="inferred from homology"/>
<evidence type="ECO:0000255" key="1">
    <source>
        <dbReference type="HAMAP-Rule" id="MF_01576"/>
    </source>
</evidence>
<sequence length="284" mass="30827">MNPVLLDGKKLSEKIKEEIRSAIEERKTKNFRIPKLATILVGNNPASETYVSMKVKACHSVGMGSEMIRLREQTTTKELLDVIDKLNSDPNVDGILLQHPTPSGIDERAAFDRIALHKDVDGVTTLSFGKLSMGVETYLPCTPYGMVLLLKEYGIDVAGKNAVVVGRSPILGKPMAMLLTEMNATVTLCHSKTQNLPDIVRNADIIIGAVGKPEFIKADWISNGAILLDAGYNPGNIGDIEISKAKDRSSFYTPVPGGVGPMTIAVLLLQTLYSAKEHFTPPVK</sequence>